<evidence type="ECO:0000250" key="1">
    <source>
        <dbReference type="UniProtKB" id="B9EJA2"/>
    </source>
</evidence>
<evidence type="ECO:0000250" key="2">
    <source>
        <dbReference type="UniProtKB" id="Q2IBD4"/>
    </source>
</evidence>
<evidence type="ECO:0000250" key="3">
    <source>
        <dbReference type="UniProtKB" id="Q8WZ74"/>
    </source>
</evidence>
<evidence type="ECO:0000255" key="4"/>
<evidence type="ECO:0000256" key="5">
    <source>
        <dbReference type="SAM" id="MobiDB-lite"/>
    </source>
</evidence>
<reference key="1">
    <citation type="submission" date="2006-09" db="EMBL/GenBank/DDBJ databases">
        <title>NISC comparative sequencing initiative.</title>
        <authorList>
            <person name="Antonellis A."/>
            <person name="Ayele K."/>
            <person name="Benjamin B."/>
            <person name="Blakesley R.W."/>
            <person name="Boakye A."/>
            <person name="Bouffard G.G."/>
            <person name="Brinkley C."/>
            <person name="Brooks S."/>
            <person name="Chu G."/>
            <person name="Coleman H."/>
            <person name="Engle J."/>
            <person name="Gestole M."/>
            <person name="Greene A."/>
            <person name="Guan X."/>
            <person name="Gupta J."/>
            <person name="Haghighi P."/>
            <person name="Han J."/>
            <person name="Hansen N."/>
            <person name="Ho S.-L."/>
            <person name="Hu P."/>
            <person name="Hunter G."/>
            <person name="Hurle B."/>
            <person name="Idol J.R."/>
            <person name="Kwong P."/>
            <person name="Laric P."/>
            <person name="Larson S."/>
            <person name="Lee-Lin S.-Q."/>
            <person name="Legaspi R."/>
            <person name="Madden M."/>
            <person name="Maduro Q.L."/>
            <person name="Maduro V.B."/>
            <person name="Margulies E.H."/>
            <person name="Masiello C."/>
            <person name="Maskeri B."/>
            <person name="McDowell J."/>
            <person name="Mojidi H.A."/>
            <person name="Mullikin J.C."/>
            <person name="Oestreicher J.S."/>
            <person name="Park M."/>
            <person name="Portnoy M.E."/>
            <person name="Prasad A."/>
            <person name="Puri O."/>
            <person name="Reddix-Dugue N."/>
            <person name="Schandler K."/>
            <person name="Schueler M.G."/>
            <person name="Sison C."/>
            <person name="Stantripop S."/>
            <person name="Stephen E."/>
            <person name="Taye A."/>
            <person name="Thomas J.W."/>
            <person name="Thomas P.J."/>
            <person name="Tsipouri V."/>
            <person name="Ung L."/>
            <person name="Vogt J.L."/>
            <person name="Wetherby K.D."/>
            <person name="Young A."/>
            <person name="Green E.D."/>
        </authorList>
    </citation>
    <scope>NUCLEOTIDE SEQUENCE [LARGE SCALE GENOMIC DNA]</scope>
</reference>
<gene>
    <name type="primary">CTTNBP2</name>
    <name type="synonym">CORTBP2</name>
</gene>
<proteinExistence type="inferred from homology"/>
<dbReference type="EMBL" id="DP000193">
    <property type="protein sequence ID" value="ABJ08858.1"/>
    <property type="molecule type" value="Genomic_DNA"/>
</dbReference>
<dbReference type="SMR" id="Q07DY4"/>
<dbReference type="GO" id="GO:0015629">
    <property type="term" value="C:actin cytoskeleton"/>
    <property type="evidence" value="ECO:0007669"/>
    <property type="project" value="TreeGrafter"/>
</dbReference>
<dbReference type="GO" id="GO:0005938">
    <property type="term" value="C:cell cortex"/>
    <property type="evidence" value="ECO:0007669"/>
    <property type="project" value="UniProtKB-SubCell"/>
</dbReference>
<dbReference type="GO" id="GO:0043197">
    <property type="term" value="C:dendritic spine"/>
    <property type="evidence" value="ECO:0000250"/>
    <property type="project" value="UniProtKB"/>
</dbReference>
<dbReference type="GO" id="GO:0090443">
    <property type="term" value="C:FAR/SIN/STRIPAK complex"/>
    <property type="evidence" value="ECO:0000250"/>
    <property type="project" value="UniProtKB"/>
</dbReference>
<dbReference type="GO" id="GO:0051721">
    <property type="term" value="F:protein phosphatase 2A binding"/>
    <property type="evidence" value="ECO:0007669"/>
    <property type="project" value="TreeGrafter"/>
</dbReference>
<dbReference type="Gene3D" id="1.25.40.20">
    <property type="entry name" value="Ankyrin repeat-containing domain"/>
    <property type="match status" value="1"/>
</dbReference>
<dbReference type="InterPro" id="IPR002110">
    <property type="entry name" value="Ankyrin_rpt"/>
</dbReference>
<dbReference type="InterPro" id="IPR036770">
    <property type="entry name" value="Ankyrin_rpt-contain_sf"/>
</dbReference>
<dbReference type="InterPro" id="IPR050719">
    <property type="entry name" value="Cortactin-Actin_Reg"/>
</dbReference>
<dbReference type="InterPro" id="IPR019131">
    <property type="entry name" value="Cortactin-binding_p2_N"/>
</dbReference>
<dbReference type="PANTHER" id="PTHR23166:SF9">
    <property type="entry name" value="CTTNBP2 N-TERMINAL-LIKE PROTEIN"/>
    <property type="match status" value="1"/>
</dbReference>
<dbReference type="PANTHER" id="PTHR23166">
    <property type="entry name" value="FILAMIN/GPBP-INTERACTING PROTEIN"/>
    <property type="match status" value="1"/>
</dbReference>
<dbReference type="Pfam" id="PF25408">
    <property type="entry name" value="AAA_lid_NAV1"/>
    <property type="match status" value="1"/>
</dbReference>
<dbReference type="Pfam" id="PF00023">
    <property type="entry name" value="Ank"/>
    <property type="match status" value="2"/>
</dbReference>
<dbReference type="Pfam" id="PF12796">
    <property type="entry name" value="Ank_2"/>
    <property type="match status" value="1"/>
</dbReference>
<dbReference type="Pfam" id="PF09727">
    <property type="entry name" value="CortBP2"/>
    <property type="match status" value="1"/>
</dbReference>
<dbReference type="SMART" id="SM00248">
    <property type="entry name" value="ANK"/>
    <property type="match status" value="6"/>
</dbReference>
<dbReference type="SUPFAM" id="SSF48403">
    <property type="entry name" value="Ankyrin repeat"/>
    <property type="match status" value="1"/>
</dbReference>
<dbReference type="PROSITE" id="PS50297">
    <property type="entry name" value="ANK_REP_REGION"/>
    <property type="match status" value="1"/>
</dbReference>
<dbReference type="PROSITE" id="PS50088">
    <property type="entry name" value="ANK_REPEAT"/>
    <property type="match status" value="4"/>
</dbReference>
<accession>Q07DY4</accession>
<keyword id="KW-0040">ANK repeat</keyword>
<keyword id="KW-0966">Cell projection</keyword>
<keyword id="KW-0175">Coiled coil</keyword>
<keyword id="KW-0963">Cytoplasm</keyword>
<keyword id="KW-0488">Methylation</keyword>
<keyword id="KW-0597">Phosphoprotein</keyword>
<keyword id="KW-0677">Repeat</keyword>
<keyword id="KW-0770">Synapse</keyword>
<sequence>MATDGASCEPDLSRAPEDAAGAAAEAAKKEFDVDTLSKSELRMLLSVMEGELEARDLVIEALRARRKEVFIQERYGRFNLNDPFLALQRDYEAGAGDKEKKPVCTNPLSILEAVMAHCKKMQERMSAQLAAAESRQKKLEMEKLQLQALEQEHKKLAARLEEERGKNKQVVLMLVKECKQLSGKVIEEAQKLEDIMAKLEEEKKKTNELEEELSAEKRRSTEMEAQMEKQLSEFDTEREQLRAKLNREEAHTTDLKEEIDKMKKMIEQLKRGSDSKPSLSLPRKTKDRRLVSISVGTEGTVTRSVACQTDLVTESADHVKKLPLTMPVKPSTGSPLVSANAKGSVCTSATMARPGIDRQASHGDLIGSSVPAFPPPSANRIEENGPSTDSTPDPTSSTPPLPSNAAPPTTQTPGIAPQNSQAPPMHSLHSPCANASLHPGLNPRIQAARFRFQGNANDPDQNGNTTQSPPSRDMSPTSRENLVAKQLARNTVTQALSRFTSPQAGAPSRPGAPPTGDVGTHPPVGRTSLKTHGVARVDRGNPPPIPPKKPGLSQTPSPPHPQLKVIIDSSRASNTGAKVDNKTVASPPSSLPQGNRVINEDNLPKSSSPQLPPKPSIDLTVAPAGCAVSALATSQVGAWPAATPGLNQPACSDSSLVIPTTIAFCSSINPVSASSCRPGASDSLLVTASGWSPSLTPLLMSGGPAPLAGRPTLLQQAAAQGNVTLLSMLLNEEGLDINYSCEDGHSALYSAAKNGHTDCVRLLLSAEAQINAADKNGFTPLCAAAAQGHFECVELLIAYDANINHAADGGQTPLYLACKNENKECIKLLLEAGTNRSVKTTDGWTPVHAAVDTGNVDSLKLLMYHRIPACGNSFNEEESESGVFDLDGGEESPEGIFKPVVPADLINHANREGWTAAHIAASKGFKNCLEILCRHGGLEPERRDKCNRTVHDVATDDCKHLLENLNALKIPLRISVGEIEPSDYGSDDLECENTICALNIRKQTSWDDFSKAVSQALTNHFQAISSDGWWSLEDVTCNNTTDSNIGLSARSIRSITLGNVPWSVGQSFTQSPWDFMRKNKAEHITVLLSGPQEGCLSSVTYASMIPLQMMQNYLRLVEQYHNVIFHGPEGSLQDYIVHQLALCLKHRQMAAGFSCEIVRAEIDAGFSKEQLLDLFISSACLIPVKQSPSKKKIIIILENLEKSSLSELLRDFLAPLENRSTESPCTFQKGNGMSECYYFHENCFLMGTIAKACLQGSDLLVQQHFRWVQLRWDGEPMQGLLQRFLRRKVVNKFKGQAPSPCDPVCKIVDWALSVWRQLNSCLARLGTPEALLGPKYFLSCPVVPGHAQVTVKWMSKLWNGVIAPRVQEAILSRASVKRQPGFGQTTAKRHPSQGQQAVVKAALSILLNKAVLHGCPLPRAELDQHTADFKGGSFPLSIVSSYNSCNKKKGESGAWRKVNTSPRRKSGRFSLPTWNKPDLSTEGIKNKTISQLNYNRNASLSKQKSLENDLSLTLNLDQRLSLGSDDEADLVKELQSMCSSKSESDISKIADSRDDLRMFDSSGNNPLLSATINNLRMPVSQKEVSPLSSHQTTECSNSKSKTELGVSRVKSFLPVPRSKVTLCSQNTKRSSSSSNTRQIEINNNSKKENWNLHKNEHLDKPNK</sequence>
<protein>
    <recommendedName>
        <fullName>Cortactin-binding protein 2</fullName>
        <shortName>CortBP2</shortName>
    </recommendedName>
</protein>
<feature type="chain" id="PRO_0000260403" description="Cortactin-binding protein 2">
    <location>
        <begin position="1"/>
        <end position="1663"/>
    </location>
</feature>
<feature type="repeat" description="ANK 1">
    <location>
        <begin position="709"/>
        <end position="739"/>
    </location>
</feature>
<feature type="repeat" description="ANK 2">
    <location>
        <begin position="743"/>
        <end position="772"/>
    </location>
</feature>
<feature type="repeat" description="ANK 3">
    <location>
        <begin position="776"/>
        <end position="805"/>
    </location>
</feature>
<feature type="repeat" description="ANK 4">
    <location>
        <begin position="809"/>
        <end position="838"/>
    </location>
</feature>
<feature type="repeat" description="ANK 5">
    <location>
        <begin position="842"/>
        <end position="871"/>
    </location>
</feature>
<feature type="repeat" description="ANK 6">
    <location>
        <begin position="912"/>
        <end position="942"/>
    </location>
</feature>
<feature type="region of interest" description="Disordered" evidence="5">
    <location>
        <begin position="1"/>
        <end position="23"/>
    </location>
</feature>
<feature type="region of interest" description="Disordered" evidence="5">
    <location>
        <begin position="203"/>
        <end position="222"/>
    </location>
</feature>
<feature type="region of interest" description="Disordered" evidence="5">
    <location>
        <begin position="358"/>
        <end position="440"/>
    </location>
</feature>
<feature type="region of interest" description="Disordered" evidence="5">
    <location>
        <begin position="454"/>
        <end position="479"/>
    </location>
</feature>
<feature type="region of interest" description="Disordered" evidence="5">
    <location>
        <begin position="499"/>
        <end position="616"/>
    </location>
</feature>
<feature type="region of interest" description="Disordered" evidence="5">
    <location>
        <begin position="1446"/>
        <end position="1477"/>
    </location>
</feature>
<feature type="region of interest" description="Disordered" evidence="5">
    <location>
        <begin position="1580"/>
        <end position="1602"/>
    </location>
</feature>
<feature type="region of interest" description="Disordered" evidence="5">
    <location>
        <begin position="1618"/>
        <end position="1663"/>
    </location>
</feature>
<feature type="coiled-coil region" evidence="4">
    <location>
        <begin position="119"/>
        <end position="276"/>
    </location>
</feature>
<feature type="compositionally biased region" description="Low complexity" evidence="5">
    <location>
        <begin position="386"/>
        <end position="396"/>
    </location>
</feature>
<feature type="compositionally biased region" description="Polar residues" evidence="5">
    <location>
        <begin position="411"/>
        <end position="422"/>
    </location>
</feature>
<feature type="compositionally biased region" description="Polar residues" evidence="5">
    <location>
        <begin position="583"/>
        <end position="593"/>
    </location>
</feature>
<feature type="compositionally biased region" description="Polar residues" evidence="5">
    <location>
        <begin position="1582"/>
        <end position="1599"/>
    </location>
</feature>
<feature type="compositionally biased region" description="Low complexity" evidence="5">
    <location>
        <begin position="1624"/>
        <end position="1638"/>
    </location>
</feature>
<feature type="compositionally biased region" description="Basic and acidic residues" evidence="5">
    <location>
        <begin position="1645"/>
        <end position="1663"/>
    </location>
</feature>
<feature type="modified residue" description="Asymmetric dimethylarginine" evidence="1">
    <location>
        <position position="498"/>
    </location>
</feature>
<feature type="modified residue" description="Phosphoserine" evidence="3">
    <location>
        <position position="1524"/>
    </location>
</feature>
<name>CTTB2_COLGU</name>
<organism>
    <name type="scientific">Colobus guereza</name>
    <name type="common">Mantled guereza</name>
    <name type="synonym">Eastern black-and-white colobus monkey</name>
    <dbReference type="NCBI Taxonomy" id="33548"/>
    <lineage>
        <taxon>Eukaryota</taxon>
        <taxon>Metazoa</taxon>
        <taxon>Chordata</taxon>
        <taxon>Craniata</taxon>
        <taxon>Vertebrata</taxon>
        <taxon>Euteleostomi</taxon>
        <taxon>Mammalia</taxon>
        <taxon>Eutheria</taxon>
        <taxon>Euarchontoglires</taxon>
        <taxon>Primates</taxon>
        <taxon>Haplorrhini</taxon>
        <taxon>Catarrhini</taxon>
        <taxon>Cercopithecidae</taxon>
        <taxon>Colobinae</taxon>
        <taxon>Colobus</taxon>
    </lineage>
</organism>
<comment type="function">
    <text evidence="2">Regulates the dendritic spine distribution of CTTN/cortactin in hippocampal neurons, and thus controls dendritic spinogenesis and dendritic spine maintenance. Associates with the striatin-interacting phosphatase and kinase (STRIPAK) core complex to regulate dendritic spine distribution of the STRIPAK complex in hippocampal neurons.</text>
</comment>
<comment type="subunit">
    <text evidence="2">Interacts with CTTN/cortactin SH3 domain. Interacts with STRN, STRN4/zinedin and MOB4/phocein; this interactions mediate the association with the STRIPAK core complex and may regulate dendritic spine distribution of the STRIPAK complex in hippocampal neurons. Activation of glutamate receptors weakens the interaction with STRN and STRN4.</text>
</comment>
<comment type="subcellular location">
    <subcellularLocation>
        <location evidence="1">Cytoplasm</location>
        <location evidence="1">Cell cortex</location>
    </subcellularLocation>
    <subcellularLocation>
        <location evidence="2">Cell projection</location>
        <location evidence="2">Dendritic spine</location>
    </subcellularLocation>
    <text evidence="2">Remains associated with dendritic spines even after glutamate stimulation.</text>
</comment>